<proteinExistence type="inferred from homology"/>
<organism>
    <name type="scientific">Penicillium rubens (strain ATCC 28089 / DSM 1075 / NRRL 1951 / Wisconsin 54-1255)</name>
    <name type="common">Penicillium chrysogenum</name>
    <dbReference type="NCBI Taxonomy" id="500485"/>
    <lineage>
        <taxon>Eukaryota</taxon>
        <taxon>Fungi</taxon>
        <taxon>Dikarya</taxon>
        <taxon>Ascomycota</taxon>
        <taxon>Pezizomycotina</taxon>
        <taxon>Eurotiomycetes</taxon>
        <taxon>Eurotiomycetidae</taxon>
        <taxon>Eurotiales</taxon>
        <taxon>Aspergillaceae</taxon>
        <taxon>Penicillium</taxon>
        <taxon>Penicillium chrysogenum species complex</taxon>
    </lineage>
</organism>
<gene>
    <name type="primary">atg5</name>
    <name type="ORF">Pc18g04440</name>
</gene>
<accession>A7KAL6</accession>
<accession>B6HBL1</accession>
<comment type="function">
    <text evidence="1 2">Involved in cytoplasm to vacuole transport (Cvt) and autophagic vesicle formation. Autophagy is essential for maintenance of amino acid levels and protein synthesis under nitrogen starvation. Required for selective autophagic degradation of the nucleus (nucleophagy). Also required for mitophagy, which eliminates defective or superfluous mitochondria in order to fulfill cellular energy requirements and prevent excess ROS production. Conjugation with atg12, through a ubiquitin-like conjugating system involving atg7 as an E1-like activating enzyme and atg10 as an E2-like conjugating enzyme, is essential for its function. The atg12-atg5 conjugate acts as an E3-like enzyme which is required for lipidation of atg8 and atg8 association to the vesicle membranes (By similarity).</text>
</comment>
<comment type="subunit">
    <text evidence="1">Conjugated with atg12.</text>
</comment>
<comment type="subcellular location">
    <subcellularLocation>
        <location evidence="1">Preautophagosomal structure membrane</location>
        <topology evidence="1">Peripheral membrane protein</topology>
    </subcellularLocation>
</comment>
<comment type="PTM">
    <text evidence="1">Conjugated to atg12; which is essential for autophagy.</text>
</comment>
<comment type="similarity">
    <text evidence="3">Belongs to the ATG5 family.</text>
</comment>
<name>ATG5_PENRW</name>
<sequence length="317" mass="35033">MENRVSLGSIQKAVWDGRLPLEIVLASSESRTFDKTDPYLISYPRISYLPSLLPKLRAFFSNFLIDPNSQSHDGWFEFEGVPLKWHYPVGLLFDLYAGVDPASKTAARDNESPGDGSSLPWRLIVHFSDWPPDLVRLDAYGMVMNDAFINSVKEADFLRNGTAKGIMSLSKEDSSGLWNAVQEVDLLSFQRISNILLPQPSQPFRNVPIRVFLPLLPDAESSSLKVVQTPLPPSIPASSMQSSQILTSRSGSTLQPQTVGTVLHTLLPNLFPSRRTPVLAKPVLHGAVIPMSAPIEEVVRSSAYGDGWAYIVVRMMG</sequence>
<reference key="1">
    <citation type="journal article" date="2007" name="Autophagy">
        <title>ATG genes involved in non-selective autophagy are conserved from yeast to man, but the selective Cvt and pexophagy pathways also require organism-specific genes.</title>
        <authorList>
            <person name="Meijer W.H."/>
            <person name="van der Klei I.J."/>
            <person name="Veenhuis M."/>
            <person name="Kiel J.A.K.W."/>
        </authorList>
    </citation>
    <scope>NUCLEOTIDE SEQUENCE [GENOMIC DNA]</scope>
    <scope>FUNCTION</scope>
</reference>
<reference key="2">
    <citation type="journal article" date="2008" name="Nat. Biotechnol.">
        <title>Genome sequencing and analysis of the filamentous fungus Penicillium chrysogenum.</title>
        <authorList>
            <person name="van den Berg M.A."/>
            <person name="Albang R."/>
            <person name="Albermann K."/>
            <person name="Badger J.H."/>
            <person name="Daran J.-M."/>
            <person name="Driessen A.J.M."/>
            <person name="Garcia-Estrada C."/>
            <person name="Fedorova N.D."/>
            <person name="Harris D.M."/>
            <person name="Heijne W.H.M."/>
            <person name="Joardar V.S."/>
            <person name="Kiel J.A.K.W."/>
            <person name="Kovalchuk A."/>
            <person name="Martin J.F."/>
            <person name="Nierman W.C."/>
            <person name="Nijland J.G."/>
            <person name="Pronk J.T."/>
            <person name="Roubos J.A."/>
            <person name="van der Klei I.J."/>
            <person name="van Peij N.N.M.E."/>
            <person name="Veenhuis M."/>
            <person name="von Doehren H."/>
            <person name="Wagner C."/>
            <person name="Wortman J.R."/>
            <person name="Bovenberg R.A.L."/>
        </authorList>
    </citation>
    <scope>NUCLEOTIDE SEQUENCE [LARGE SCALE GENOMIC DNA]</scope>
    <source>
        <strain>ATCC 28089 / DSM 1075 / NRRL 1951 / Wisconsin 54-1255</strain>
    </source>
</reference>
<evidence type="ECO:0000250" key="1"/>
<evidence type="ECO:0000269" key="2">
    <source>
    </source>
</evidence>
<evidence type="ECO:0000305" key="3"/>
<dbReference type="EMBL" id="EF107738">
    <property type="protein sequence ID" value="ABO31076.1"/>
    <property type="molecule type" value="Genomic_DNA"/>
</dbReference>
<dbReference type="EMBL" id="AM920433">
    <property type="protein sequence ID" value="CAP94668.1"/>
    <property type="molecule type" value="Genomic_DNA"/>
</dbReference>
<dbReference type="RefSeq" id="XP_002562278.1">
    <property type="nucleotide sequence ID" value="XM_002562232.1"/>
</dbReference>
<dbReference type="SMR" id="A7KAL6"/>
<dbReference type="STRING" id="500485.A7KAL6"/>
<dbReference type="GeneID" id="8306920"/>
<dbReference type="KEGG" id="pcs:N7525_000557"/>
<dbReference type="VEuPathDB" id="FungiDB:PCH_Pc18g04440"/>
<dbReference type="eggNOG" id="KOG2976">
    <property type="taxonomic scope" value="Eukaryota"/>
</dbReference>
<dbReference type="HOGENOM" id="CLU_051894_2_0_1"/>
<dbReference type="OMA" id="SIQKAVW"/>
<dbReference type="OrthoDB" id="272162at2759"/>
<dbReference type="BioCyc" id="PCHR:PC18G04440-MONOMER"/>
<dbReference type="Proteomes" id="UP000000724">
    <property type="component" value="Contig Pc00c18"/>
</dbReference>
<dbReference type="GO" id="GO:0034274">
    <property type="term" value="C:Atg12-Atg5-Atg16 complex"/>
    <property type="evidence" value="ECO:0007669"/>
    <property type="project" value="TreeGrafter"/>
</dbReference>
<dbReference type="GO" id="GO:0005776">
    <property type="term" value="C:autophagosome"/>
    <property type="evidence" value="ECO:0007669"/>
    <property type="project" value="TreeGrafter"/>
</dbReference>
<dbReference type="GO" id="GO:0044233">
    <property type="term" value="C:mitochondria-associated endoplasmic reticulum membrane contact site"/>
    <property type="evidence" value="ECO:0007669"/>
    <property type="project" value="TreeGrafter"/>
</dbReference>
<dbReference type="GO" id="GO:0061908">
    <property type="term" value="C:phagophore"/>
    <property type="evidence" value="ECO:0007669"/>
    <property type="project" value="TreeGrafter"/>
</dbReference>
<dbReference type="GO" id="GO:0034045">
    <property type="term" value="C:phagophore assembly site membrane"/>
    <property type="evidence" value="ECO:0007669"/>
    <property type="project" value="UniProtKB-SubCell"/>
</dbReference>
<dbReference type="GO" id="GO:0019776">
    <property type="term" value="F:Atg8-family ligase activity"/>
    <property type="evidence" value="ECO:0007669"/>
    <property type="project" value="TreeGrafter"/>
</dbReference>
<dbReference type="GO" id="GO:0000422">
    <property type="term" value="P:autophagy of mitochondrion"/>
    <property type="evidence" value="ECO:0007669"/>
    <property type="project" value="TreeGrafter"/>
</dbReference>
<dbReference type="GO" id="GO:0006995">
    <property type="term" value="P:cellular response to nitrogen starvation"/>
    <property type="evidence" value="ECO:0007669"/>
    <property type="project" value="TreeGrafter"/>
</dbReference>
<dbReference type="GO" id="GO:0034727">
    <property type="term" value="P:piecemeal microautophagy of the nucleus"/>
    <property type="evidence" value="ECO:0007669"/>
    <property type="project" value="TreeGrafter"/>
</dbReference>
<dbReference type="GO" id="GO:0015031">
    <property type="term" value="P:protein transport"/>
    <property type="evidence" value="ECO:0007669"/>
    <property type="project" value="UniProtKB-KW"/>
</dbReference>
<dbReference type="FunFam" id="1.10.246.190:FF:000004">
    <property type="entry name" value="Autophagy protein 5"/>
    <property type="match status" value="1"/>
</dbReference>
<dbReference type="FunFam" id="3.10.20.620:FF:000004">
    <property type="entry name" value="Autophagy protein 5"/>
    <property type="match status" value="1"/>
</dbReference>
<dbReference type="FunFam" id="3.10.20.90:FF:000290">
    <property type="entry name" value="Autophagy protein 5"/>
    <property type="match status" value="1"/>
</dbReference>
<dbReference type="Gene3D" id="3.10.20.620">
    <property type="match status" value="1"/>
</dbReference>
<dbReference type="Gene3D" id="1.10.246.190">
    <property type="entry name" value="Autophagy protein Apg5, helix rich domain"/>
    <property type="match status" value="1"/>
</dbReference>
<dbReference type="Gene3D" id="3.10.20.90">
    <property type="entry name" value="Phosphatidylinositol 3-kinase Catalytic Subunit, Chain A, domain 1"/>
    <property type="match status" value="1"/>
</dbReference>
<dbReference type="InterPro" id="IPR007239">
    <property type="entry name" value="Atg5"/>
</dbReference>
<dbReference type="InterPro" id="IPR048940">
    <property type="entry name" value="ATG5_HBR"/>
</dbReference>
<dbReference type="InterPro" id="IPR042526">
    <property type="entry name" value="Atg5_HR"/>
</dbReference>
<dbReference type="InterPro" id="IPR048939">
    <property type="entry name" value="ATG5_UblA"/>
</dbReference>
<dbReference type="InterPro" id="IPR042527">
    <property type="entry name" value="Atg5_UblA_dom_sf"/>
</dbReference>
<dbReference type="InterPro" id="IPR048318">
    <property type="entry name" value="ATG5_UblB"/>
</dbReference>
<dbReference type="PANTHER" id="PTHR13040">
    <property type="entry name" value="AUTOPHAGY PROTEIN 5"/>
    <property type="match status" value="1"/>
</dbReference>
<dbReference type="PANTHER" id="PTHR13040:SF2">
    <property type="entry name" value="AUTOPHAGY PROTEIN 5"/>
    <property type="match status" value="1"/>
</dbReference>
<dbReference type="Pfam" id="PF20637">
    <property type="entry name" value="ATG5_HBR"/>
    <property type="match status" value="1"/>
</dbReference>
<dbReference type="Pfam" id="PF20638">
    <property type="entry name" value="ATG5_UblA"/>
    <property type="match status" value="1"/>
</dbReference>
<dbReference type="Pfam" id="PF04106">
    <property type="entry name" value="ATG5_UblB"/>
    <property type="match status" value="1"/>
</dbReference>
<keyword id="KW-0072">Autophagy</keyword>
<keyword id="KW-1017">Isopeptide bond</keyword>
<keyword id="KW-0472">Membrane</keyword>
<keyword id="KW-0653">Protein transport</keyword>
<keyword id="KW-1185">Reference proteome</keyword>
<keyword id="KW-0813">Transport</keyword>
<keyword id="KW-0832">Ubl conjugation</keyword>
<protein>
    <recommendedName>
        <fullName>Autophagy protein 5</fullName>
    </recommendedName>
</protein>
<feature type="chain" id="PRO_0000317857" description="Autophagy protein 5">
    <location>
        <begin position="1"/>
        <end position="317"/>
    </location>
</feature>
<feature type="cross-link" description="Glycyl lysine isopeptide (Lys-Gly) (interchain with G-Cter in atg12)" evidence="1">
    <location>
        <position position="153"/>
    </location>
</feature>